<proteinExistence type="evidence at protein level"/>
<accession>Q9NFZ3</accession>
<accession>A4V0H1</accession>
<accession>Q95RZ3</accession>
<accession>Q9VLD3</accession>
<comment type="function">
    <text>Guanine nucleotide-binding proteins (G proteins) are involved as a modulator or transducer in various transmembrane signaling systems. The beta and gamma chains are required for the GTPase activity, for replacement of GDP by GTP, and for G protein-effector interaction. This subunit functions in visual transduction in the compound eye.</text>
</comment>
<comment type="subunit">
    <text evidence="2">G proteins are composed of 3 units, alpha, beta and gamma. Interacts with Gbeta76C/Guanine nucleotide-binding protein subunit beta-2 (By similarity).</text>
</comment>
<comment type="interaction">
    <interactant intactId="EBI-2695634">
        <id>Q9NFZ3</id>
    </interactant>
    <interactant intactId="EBI-128499">
        <id>P29829</id>
        <label>Gbeta76C</label>
    </interactant>
    <organismsDiffer>false</organismsDiffer>
    <experiments>2</experiments>
</comment>
<comment type="subcellular location">
    <subcellularLocation>
        <location evidence="5">Cell membrane</location>
        <topology evidence="5">Lipid-anchor</topology>
        <orientation evidence="5">Cytoplasmic side</orientation>
    </subcellularLocation>
    <subcellularLocation>
        <location evidence="3">Cytoplasm</location>
    </subcellularLocation>
    <subcellularLocation>
        <location evidence="3">Cell projection</location>
        <location evidence="3">Axon</location>
    </subcellularLocation>
    <subcellularLocation>
        <location evidence="3">Cell projection</location>
        <location evidence="3">Rhabdomere</location>
    </subcellularLocation>
</comment>
<comment type="tissue specificity">
    <text evidence="3">Almost exclusively expressed in photoreceptor cells of the compound eye with some low level expression in the rest of the head (at protein level).</text>
</comment>
<comment type="similarity">
    <text evidence="5">Belongs to the G protein gamma family.</text>
</comment>
<comment type="sequence caution" evidence="5">
    <conflict type="erroneous translation">
        <sequence resource="EMBL-CDS" id="AAL28579"/>
    </conflict>
    <text>Wrong choice of frame.</text>
</comment>
<protein>
    <recommendedName>
        <fullName>Guanine nucleotide-binding protein subunit gamma-e</fullName>
        <shortName>Ggamma(e)</shortName>
    </recommendedName>
</protein>
<feature type="initiator methionine" description="Removed" evidence="4">
    <location>
        <position position="1"/>
    </location>
</feature>
<feature type="chain" id="PRO_0000012679" description="Guanine nucleotide-binding protein subunit gamma-e">
    <location>
        <begin position="2"/>
        <end position="69"/>
    </location>
</feature>
<feature type="propeptide" id="PRO_0000012680" description="Removed in mature form" evidence="1">
    <location>
        <begin position="70"/>
        <end position="72"/>
    </location>
</feature>
<feature type="modified residue" description="N-acetylaspartate" evidence="4">
    <location>
        <position position="2"/>
    </location>
</feature>
<feature type="modified residue" description="Cysteine methyl ester" evidence="4">
    <location>
        <position position="69"/>
    </location>
</feature>
<feature type="lipid moiety-binding region" description="S-farnesyl cysteine" evidence="4">
    <location>
        <position position="69"/>
    </location>
</feature>
<feature type="mutagenesis site" description="Loss of farnesylation." evidence="4">
    <original>C</original>
    <variation>G</variation>
    <location>
        <position position="69"/>
    </location>
</feature>
<gene>
    <name evidence="6" type="primary">Ggamma30A</name>
    <name evidence="6" type="synonym">Ggammae</name>
    <name evidence="6" type="ORF">CG3694</name>
</gene>
<reference key="1">
    <citation type="journal article" date="1999" name="J. Biol. Chem.">
        <title>A novel Ggamma isolated from Drosophila constitutes a visual G protein gamma subunit of the fly compound eye.</title>
        <authorList>
            <person name="Schulz S."/>
            <person name="Huber A."/>
            <person name="Schwab K."/>
            <person name="Paulsen R."/>
        </authorList>
    </citation>
    <scope>NUCLEOTIDE SEQUENCE [MRNA]</scope>
    <scope>SUBCELLULAR LOCATION</scope>
    <scope>TISSUE SPECIFICITY</scope>
    <source>
        <tissue>Eye</tissue>
    </source>
</reference>
<reference key="2">
    <citation type="journal article" date="2000" name="Science">
        <title>The genome sequence of Drosophila melanogaster.</title>
        <authorList>
            <person name="Adams M.D."/>
            <person name="Celniker S.E."/>
            <person name="Holt R.A."/>
            <person name="Evans C.A."/>
            <person name="Gocayne J.D."/>
            <person name="Amanatides P.G."/>
            <person name="Scherer S.E."/>
            <person name="Li P.W."/>
            <person name="Hoskins R.A."/>
            <person name="Galle R.F."/>
            <person name="George R.A."/>
            <person name="Lewis S.E."/>
            <person name="Richards S."/>
            <person name="Ashburner M."/>
            <person name="Henderson S.N."/>
            <person name="Sutton G.G."/>
            <person name="Wortman J.R."/>
            <person name="Yandell M.D."/>
            <person name="Zhang Q."/>
            <person name="Chen L.X."/>
            <person name="Brandon R.C."/>
            <person name="Rogers Y.-H.C."/>
            <person name="Blazej R.G."/>
            <person name="Champe M."/>
            <person name="Pfeiffer B.D."/>
            <person name="Wan K.H."/>
            <person name="Doyle C."/>
            <person name="Baxter E.G."/>
            <person name="Helt G."/>
            <person name="Nelson C.R."/>
            <person name="Miklos G.L.G."/>
            <person name="Abril J.F."/>
            <person name="Agbayani A."/>
            <person name="An H.-J."/>
            <person name="Andrews-Pfannkoch C."/>
            <person name="Baldwin D."/>
            <person name="Ballew R.M."/>
            <person name="Basu A."/>
            <person name="Baxendale J."/>
            <person name="Bayraktaroglu L."/>
            <person name="Beasley E.M."/>
            <person name="Beeson K.Y."/>
            <person name="Benos P.V."/>
            <person name="Berman B.P."/>
            <person name="Bhandari D."/>
            <person name="Bolshakov S."/>
            <person name="Borkova D."/>
            <person name="Botchan M.R."/>
            <person name="Bouck J."/>
            <person name="Brokstein P."/>
            <person name="Brottier P."/>
            <person name="Burtis K.C."/>
            <person name="Busam D.A."/>
            <person name="Butler H."/>
            <person name="Cadieu E."/>
            <person name="Center A."/>
            <person name="Chandra I."/>
            <person name="Cherry J.M."/>
            <person name="Cawley S."/>
            <person name="Dahlke C."/>
            <person name="Davenport L.B."/>
            <person name="Davies P."/>
            <person name="de Pablos B."/>
            <person name="Delcher A."/>
            <person name="Deng Z."/>
            <person name="Mays A.D."/>
            <person name="Dew I."/>
            <person name="Dietz S.M."/>
            <person name="Dodson K."/>
            <person name="Doup L.E."/>
            <person name="Downes M."/>
            <person name="Dugan-Rocha S."/>
            <person name="Dunkov B.C."/>
            <person name="Dunn P."/>
            <person name="Durbin K.J."/>
            <person name="Evangelista C.C."/>
            <person name="Ferraz C."/>
            <person name="Ferriera S."/>
            <person name="Fleischmann W."/>
            <person name="Fosler C."/>
            <person name="Gabrielian A.E."/>
            <person name="Garg N.S."/>
            <person name="Gelbart W.M."/>
            <person name="Glasser K."/>
            <person name="Glodek A."/>
            <person name="Gong F."/>
            <person name="Gorrell J.H."/>
            <person name="Gu Z."/>
            <person name="Guan P."/>
            <person name="Harris M."/>
            <person name="Harris N.L."/>
            <person name="Harvey D.A."/>
            <person name="Heiman T.J."/>
            <person name="Hernandez J.R."/>
            <person name="Houck J."/>
            <person name="Hostin D."/>
            <person name="Houston K.A."/>
            <person name="Howland T.J."/>
            <person name="Wei M.-H."/>
            <person name="Ibegwam C."/>
            <person name="Jalali M."/>
            <person name="Kalush F."/>
            <person name="Karpen G.H."/>
            <person name="Ke Z."/>
            <person name="Kennison J.A."/>
            <person name="Ketchum K.A."/>
            <person name="Kimmel B.E."/>
            <person name="Kodira C.D."/>
            <person name="Kraft C.L."/>
            <person name="Kravitz S."/>
            <person name="Kulp D."/>
            <person name="Lai Z."/>
            <person name="Lasko P."/>
            <person name="Lei Y."/>
            <person name="Levitsky A.A."/>
            <person name="Li J.H."/>
            <person name="Li Z."/>
            <person name="Liang Y."/>
            <person name="Lin X."/>
            <person name="Liu X."/>
            <person name="Mattei B."/>
            <person name="McIntosh T.C."/>
            <person name="McLeod M.P."/>
            <person name="McPherson D."/>
            <person name="Merkulov G."/>
            <person name="Milshina N.V."/>
            <person name="Mobarry C."/>
            <person name="Morris J."/>
            <person name="Moshrefi A."/>
            <person name="Mount S.M."/>
            <person name="Moy M."/>
            <person name="Murphy B."/>
            <person name="Murphy L."/>
            <person name="Muzny D.M."/>
            <person name="Nelson D.L."/>
            <person name="Nelson D.R."/>
            <person name="Nelson K.A."/>
            <person name="Nixon K."/>
            <person name="Nusskern D.R."/>
            <person name="Pacleb J.M."/>
            <person name="Palazzolo M."/>
            <person name="Pittman G.S."/>
            <person name="Pan S."/>
            <person name="Pollard J."/>
            <person name="Puri V."/>
            <person name="Reese M.G."/>
            <person name="Reinert K."/>
            <person name="Remington K."/>
            <person name="Saunders R.D.C."/>
            <person name="Scheeler F."/>
            <person name="Shen H."/>
            <person name="Shue B.C."/>
            <person name="Siden-Kiamos I."/>
            <person name="Simpson M."/>
            <person name="Skupski M.P."/>
            <person name="Smith T.J."/>
            <person name="Spier E."/>
            <person name="Spradling A.C."/>
            <person name="Stapleton M."/>
            <person name="Strong R."/>
            <person name="Sun E."/>
            <person name="Svirskas R."/>
            <person name="Tector C."/>
            <person name="Turner R."/>
            <person name="Venter E."/>
            <person name="Wang A.H."/>
            <person name="Wang X."/>
            <person name="Wang Z.-Y."/>
            <person name="Wassarman D.A."/>
            <person name="Weinstock G.M."/>
            <person name="Weissenbach J."/>
            <person name="Williams S.M."/>
            <person name="Woodage T."/>
            <person name="Worley K.C."/>
            <person name="Wu D."/>
            <person name="Yang S."/>
            <person name="Yao Q.A."/>
            <person name="Ye J."/>
            <person name="Yeh R.-F."/>
            <person name="Zaveri J.S."/>
            <person name="Zhan M."/>
            <person name="Zhang G."/>
            <person name="Zhao Q."/>
            <person name="Zheng L."/>
            <person name="Zheng X.H."/>
            <person name="Zhong F.N."/>
            <person name="Zhong W."/>
            <person name="Zhou X."/>
            <person name="Zhu S.C."/>
            <person name="Zhu X."/>
            <person name="Smith H.O."/>
            <person name="Gibbs R.A."/>
            <person name="Myers E.W."/>
            <person name="Rubin G.M."/>
            <person name="Venter J.C."/>
        </authorList>
    </citation>
    <scope>NUCLEOTIDE SEQUENCE [LARGE SCALE GENOMIC DNA]</scope>
    <source>
        <strain>Berkeley</strain>
    </source>
</reference>
<reference key="3">
    <citation type="journal article" date="2002" name="Genome Biol.">
        <title>Annotation of the Drosophila melanogaster euchromatic genome: a systematic review.</title>
        <authorList>
            <person name="Misra S."/>
            <person name="Crosby M.A."/>
            <person name="Mungall C.J."/>
            <person name="Matthews B.B."/>
            <person name="Campbell K.S."/>
            <person name="Hradecky P."/>
            <person name="Huang Y."/>
            <person name="Kaminker J.S."/>
            <person name="Millburn G.H."/>
            <person name="Prochnik S.E."/>
            <person name="Smith C.D."/>
            <person name="Tupy J.L."/>
            <person name="Whitfield E.J."/>
            <person name="Bayraktaroglu L."/>
            <person name="Berman B.P."/>
            <person name="Bettencourt B.R."/>
            <person name="Celniker S.E."/>
            <person name="de Grey A.D.N.J."/>
            <person name="Drysdale R.A."/>
            <person name="Harris N.L."/>
            <person name="Richter J."/>
            <person name="Russo S."/>
            <person name="Schroeder A.J."/>
            <person name="Shu S.Q."/>
            <person name="Stapleton M."/>
            <person name="Yamada C."/>
            <person name="Ashburner M."/>
            <person name="Gelbart W.M."/>
            <person name="Rubin G.M."/>
            <person name="Lewis S.E."/>
        </authorList>
    </citation>
    <scope>GENOME REANNOTATION</scope>
    <source>
        <strain>Berkeley</strain>
    </source>
</reference>
<reference key="4">
    <citation type="journal article" date="2002" name="Genome Biol.">
        <title>A Drosophila full-length cDNA resource.</title>
        <authorList>
            <person name="Stapleton M."/>
            <person name="Carlson J.W."/>
            <person name="Brokstein P."/>
            <person name="Yu C."/>
            <person name="Champe M."/>
            <person name="George R.A."/>
            <person name="Guarin H."/>
            <person name="Kronmiller B."/>
            <person name="Pacleb J.M."/>
            <person name="Park S."/>
            <person name="Wan K.H."/>
            <person name="Rubin G.M."/>
            <person name="Celniker S.E."/>
        </authorList>
    </citation>
    <scope>NUCLEOTIDE SEQUENCE [LARGE SCALE MRNA]</scope>
    <source>
        <strain>Berkeley</strain>
        <tissue>Head</tissue>
    </source>
</reference>
<reference key="5">
    <citation type="journal article" date="2004" name="J. Biol. Chem.">
        <title>Targeted mutagenesis of the farnesylation site of Drosophila Ggammae disrupts membrane association of the G protein betagamma complex and affects the light sensitivity of the visual system.</title>
        <authorList>
            <person name="Schillo S."/>
            <person name="Belusic G."/>
            <person name="Hartmann K."/>
            <person name="Franz C."/>
            <person name="Kuhl B."/>
            <person name="Brenner-Weiss G."/>
            <person name="Paulsen R."/>
            <person name="Huber A."/>
        </authorList>
    </citation>
    <scope>ACETYLATION AT ASP-2</scope>
    <scope>ISOPRENYLATION AT CYS-69</scope>
    <scope>METHYLATION AT CYS-69</scope>
    <scope>MUTAGENESIS OF CYS-69</scope>
</reference>
<evidence type="ECO:0000250" key="1"/>
<evidence type="ECO:0000250" key="2">
    <source>
        <dbReference type="UniProtKB" id="Q9NFZ2"/>
    </source>
</evidence>
<evidence type="ECO:0000269" key="3">
    <source>
    </source>
</evidence>
<evidence type="ECO:0000269" key="4">
    <source>
    </source>
</evidence>
<evidence type="ECO:0000305" key="5"/>
<evidence type="ECO:0000312" key="6">
    <source>
        <dbReference type="FlyBase" id="FBgn0267252"/>
    </source>
</evidence>
<keyword id="KW-0007">Acetylation</keyword>
<keyword id="KW-1003">Cell membrane</keyword>
<keyword id="KW-0966">Cell projection</keyword>
<keyword id="KW-0963">Cytoplasm</keyword>
<keyword id="KW-0449">Lipoprotein</keyword>
<keyword id="KW-0472">Membrane</keyword>
<keyword id="KW-0488">Methylation</keyword>
<keyword id="KW-0636">Prenylation</keyword>
<keyword id="KW-1185">Reference proteome</keyword>
<keyword id="KW-0716">Sensory transduction</keyword>
<keyword id="KW-0807">Transducer</keyword>
<keyword id="KW-0844">Vision</keyword>
<name>GBGE_DROME</name>
<dbReference type="EMBL" id="AJ250440">
    <property type="protein sequence ID" value="CAB70093.1"/>
    <property type="molecule type" value="mRNA"/>
</dbReference>
<dbReference type="EMBL" id="AE014134">
    <property type="protein sequence ID" value="AAF52759.2"/>
    <property type="molecule type" value="Genomic_DNA"/>
</dbReference>
<dbReference type="EMBL" id="AE014134">
    <property type="protein sequence ID" value="AAF52760.2"/>
    <property type="molecule type" value="Genomic_DNA"/>
</dbReference>
<dbReference type="EMBL" id="AE014134">
    <property type="protein sequence ID" value="AAF52761.2"/>
    <property type="molecule type" value="Genomic_DNA"/>
</dbReference>
<dbReference type="EMBL" id="AY061031">
    <property type="protein sequence ID" value="AAL28579.1"/>
    <property type="status" value="ALT_SEQ"/>
    <property type="molecule type" value="mRNA"/>
</dbReference>
<dbReference type="RefSeq" id="NP_001162918.1">
    <property type="nucleotide sequence ID" value="NM_001169447.2"/>
</dbReference>
<dbReference type="RefSeq" id="NP_001188749.1">
    <property type="nucleotide sequence ID" value="NM_001201820.2"/>
</dbReference>
<dbReference type="RefSeq" id="NP_001245950.1">
    <property type="nucleotide sequence ID" value="NM_001259021.2"/>
</dbReference>
<dbReference type="RefSeq" id="NP_524807.1">
    <property type="nucleotide sequence ID" value="NM_080068.4"/>
</dbReference>
<dbReference type="RefSeq" id="NP_723451.1">
    <property type="nucleotide sequence ID" value="NM_164851.3"/>
</dbReference>
<dbReference type="RefSeq" id="NP_723452.1">
    <property type="nucleotide sequence ID" value="NM_164852.3"/>
</dbReference>
<dbReference type="SMR" id="Q9NFZ3"/>
<dbReference type="BioGRID" id="69527">
    <property type="interactions" value="2"/>
</dbReference>
<dbReference type="FunCoup" id="Q9NFZ3">
    <property type="interactions" value="112"/>
</dbReference>
<dbReference type="IntAct" id="Q9NFZ3">
    <property type="interactions" value="2"/>
</dbReference>
<dbReference type="STRING" id="7227.FBpp0312039"/>
<dbReference type="iPTMnet" id="Q9NFZ3"/>
<dbReference type="PaxDb" id="7227-FBpp0291070"/>
<dbReference type="DNASU" id="45234"/>
<dbReference type="EnsemblMetazoa" id="FBtr0079795">
    <property type="protein sequence ID" value="FBpp0079395"/>
    <property type="gene ID" value="FBgn0267252"/>
</dbReference>
<dbReference type="EnsemblMetazoa" id="FBtr0079796">
    <property type="protein sequence ID" value="FBpp0079396"/>
    <property type="gene ID" value="FBgn0267252"/>
</dbReference>
<dbReference type="EnsemblMetazoa" id="FBtr0079797">
    <property type="protein sequence ID" value="FBpp0079397"/>
    <property type="gene ID" value="FBgn0267252"/>
</dbReference>
<dbReference type="EnsemblMetazoa" id="FBtr0303895">
    <property type="protein sequence ID" value="FBpp0292898"/>
    <property type="gene ID" value="FBgn0267252"/>
</dbReference>
<dbReference type="EnsemblMetazoa" id="FBtr0309247">
    <property type="protein sequence ID" value="FBpp0301186"/>
    <property type="gene ID" value="FBgn0267252"/>
</dbReference>
<dbReference type="EnsemblMetazoa" id="FBtr0330019">
    <property type="protein sequence ID" value="FBpp0303053"/>
    <property type="gene ID" value="FBgn0267252"/>
</dbReference>
<dbReference type="GeneID" id="45234"/>
<dbReference type="KEGG" id="dme:Dmel_CG3694"/>
<dbReference type="AGR" id="FB:FBgn0267252"/>
<dbReference type="CTD" id="45234"/>
<dbReference type="FlyBase" id="FBgn0267252">
    <property type="gene designation" value="Ggamma30A"/>
</dbReference>
<dbReference type="VEuPathDB" id="VectorBase:FBgn0267252"/>
<dbReference type="eggNOG" id="KOG4119">
    <property type="taxonomic scope" value="Eukaryota"/>
</dbReference>
<dbReference type="HOGENOM" id="CLU_1295607_0_0_1"/>
<dbReference type="InParanoid" id="Q9NFZ3"/>
<dbReference type="OrthoDB" id="9922095at2759"/>
<dbReference type="PhylomeDB" id="Q9NFZ3"/>
<dbReference type="Reactome" id="R-DME-1296041">
    <property type="pathway name" value="Activation of G protein gated Potassium channels"/>
</dbReference>
<dbReference type="Reactome" id="R-DME-202040">
    <property type="pathway name" value="G-protein activation"/>
</dbReference>
<dbReference type="Reactome" id="R-DME-392170">
    <property type="pathway name" value="ADP signalling through P2Y purinoceptor 12"/>
</dbReference>
<dbReference type="Reactome" id="R-DME-392451">
    <property type="pathway name" value="G beta:gamma signalling through PI3Kgamma"/>
</dbReference>
<dbReference type="Reactome" id="R-DME-392851">
    <property type="pathway name" value="Prostacyclin signalling through prostacyclin receptor"/>
</dbReference>
<dbReference type="Reactome" id="R-DME-400042">
    <property type="pathway name" value="Adrenaline,noradrenaline inhibits insulin secretion"/>
</dbReference>
<dbReference type="Reactome" id="R-DME-4086398">
    <property type="pathway name" value="Ca2+ pathway"/>
</dbReference>
<dbReference type="Reactome" id="R-DME-416476">
    <property type="pathway name" value="G alpha (q) signalling events"/>
</dbReference>
<dbReference type="Reactome" id="R-DME-416482">
    <property type="pathway name" value="G alpha (12/13) signalling events"/>
</dbReference>
<dbReference type="Reactome" id="R-DME-418217">
    <property type="pathway name" value="G beta:gamma signalling through PLC beta"/>
</dbReference>
<dbReference type="Reactome" id="R-DME-418555">
    <property type="pathway name" value="G alpha (s) signalling events"/>
</dbReference>
<dbReference type="Reactome" id="R-DME-418594">
    <property type="pathway name" value="G alpha (i) signalling events"/>
</dbReference>
<dbReference type="Reactome" id="R-DME-418597">
    <property type="pathway name" value="G alpha (z) signalling events"/>
</dbReference>
<dbReference type="Reactome" id="R-DME-428930">
    <property type="pathway name" value="Thromboxane signalling through TP receptor"/>
</dbReference>
<dbReference type="Reactome" id="R-DME-500657">
    <property type="pathway name" value="Presynaptic function of Kainate receptors"/>
</dbReference>
<dbReference type="Reactome" id="R-DME-6814122">
    <property type="pathway name" value="Cooperation of PDCL (PhLP1) and TRiC/CCT in G-protein beta folding"/>
</dbReference>
<dbReference type="Reactome" id="R-DME-8964315">
    <property type="pathway name" value="G beta:gamma signalling through BTK"/>
</dbReference>
<dbReference type="Reactome" id="R-DME-8964616">
    <property type="pathway name" value="G beta:gamma signalling through CDC42"/>
</dbReference>
<dbReference type="Reactome" id="R-DME-9009391">
    <property type="pathway name" value="Extra-nuclear estrogen signaling"/>
</dbReference>
<dbReference type="Reactome" id="R-DME-997272">
    <property type="pathway name" value="Inhibition of voltage gated Ca2+ channels via Gbeta/gamma subunits"/>
</dbReference>
<dbReference type="BioGRID-ORCS" id="45234">
    <property type="hits" value="0 hits in 1 CRISPR screen"/>
</dbReference>
<dbReference type="GenomeRNAi" id="45234"/>
<dbReference type="PRO" id="PR:Q9NFZ3"/>
<dbReference type="Proteomes" id="UP000000803">
    <property type="component" value="Chromosome 2L"/>
</dbReference>
<dbReference type="Bgee" id="FBgn0267252">
    <property type="expression patterns" value="Expressed in outer photoreceptor cell (Drosophila) in insect head and 211 other cell types or tissues"/>
</dbReference>
<dbReference type="ExpressionAtlas" id="Q9NFZ3">
    <property type="expression patterns" value="baseline and differential"/>
</dbReference>
<dbReference type="GO" id="GO:0030424">
    <property type="term" value="C:axon"/>
    <property type="evidence" value="ECO:0007669"/>
    <property type="project" value="UniProtKB-SubCell"/>
</dbReference>
<dbReference type="GO" id="GO:0005737">
    <property type="term" value="C:cytoplasm"/>
    <property type="evidence" value="ECO:0000314"/>
    <property type="project" value="FlyBase"/>
</dbReference>
<dbReference type="GO" id="GO:0005834">
    <property type="term" value="C:heterotrimeric G-protein complex"/>
    <property type="evidence" value="ECO:0000353"/>
    <property type="project" value="FlyBase"/>
</dbReference>
<dbReference type="GO" id="GO:0016028">
    <property type="term" value="C:rhabdomere"/>
    <property type="evidence" value="ECO:0000314"/>
    <property type="project" value="FlyBase"/>
</dbReference>
<dbReference type="GO" id="GO:0031681">
    <property type="term" value="F:G-protein beta-subunit binding"/>
    <property type="evidence" value="ECO:0000318"/>
    <property type="project" value="GO_Central"/>
</dbReference>
<dbReference type="GO" id="GO:0046982">
    <property type="term" value="F:protein heterodimerization activity"/>
    <property type="evidence" value="ECO:0000353"/>
    <property type="project" value="FlyBase"/>
</dbReference>
<dbReference type="GO" id="GO:0071244">
    <property type="term" value="P:cellular response to carbon dioxide"/>
    <property type="evidence" value="ECO:0000315"/>
    <property type="project" value="FlyBase"/>
</dbReference>
<dbReference type="GO" id="GO:0007186">
    <property type="term" value="P:G protein-coupled receptor signaling pathway"/>
    <property type="evidence" value="ECO:0000314"/>
    <property type="project" value="FlyBase"/>
</dbReference>
<dbReference type="GO" id="GO:0007200">
    <property type="term" value="P:phospholipase C-activating G protein-coupled receptor signaling pathway"/>
    <property type="evidence" value="ECO:0007669"/>
    <property type="project" value="InterPro"/>
</dbReference>
<dbReference type="GO" id="GO:0007602">
    <property type="term" value="P:phototransduction"/>
    <property type="evidence" value="ECO:0000353"/>
    <property type="project" value="FlyBase"/>
</dbReference>
<dbReference type="GO" id="GO:0050909">
    <property type="term" value="P:sensory perception of taste"/>
    <property type="evidence" value="ECO:0007669"/>
    <property type="project" value="InterPro"/>
</dbReference>
<dbReference type="GO" id="GO:0007601">
    <property type="term" value="P:visual perception"/>
    <property type="evidence" value="ECO:0007669"/>
    <property type="project" value="UniProtKB-KW"/>
</dbReference>
<dbReference type="CDD" id="cd00068">
    <property type="entry name" value="GGL"/>
    <property type="match status" value="1"/>
</dbReference>
<dbReference type="FunFam" id="4.10.260.10:FF:000006">
    <property type="entry name" value="Guanine nucleotide-binding protein subunit gamma"/>
    <property type="match status" value="1"/>
</dbReference>
<dbReference type="Gene3D" id="4.10.260.10">
    <property type="entry name" value="Transducin (heterotrimeric G protein), gamma chain"/>
    <property type="match status" value="1"/>
</dbReference>
<dbReference type="InterPro" id="IPR015898">
    <property type="entry name" value="G-protein_gamma-like_dom"/>
</dbReference>
<dbReference type="InterPro" id="IPR036284">
    <property type="entry name" value="GGL_sf"/>
</dbReference>
<dbReference type="InterPro" id="IPR039227">
    <property type="entry name" value="GNG13"/>
</dbReference>
<dbReference type="InterPro" id="IPR001770">
    <property type="entry name" value="Gprotein-gamma"/>
</dbReference>
<dbReference type="PANTHER" id="PTHR15936">
    <property type="entry name" value="GUANINE NUCLEOTIDE-BINDING PROTEIN G I /G S /G O GAMMA-13 SUBUNIT"/>
    <property type="match status" value="1"/>
</dbReference>
<dbReference type="PANTHER" id="PTHR15936:SF2">
    <property type="entry name" value="GUANINE NUCLEOTIDE-BINDING PROTEIN G(I)_G(S)_G(O) SUBUNIT GAMMA-13"/>
    <property type="match status" value="1"/>
</dbReference>
<dbReference type="Pfam" id="PF00631">
    <property type="entry name" value="G-gamma"/>
    <property type="match status" value="1"/>
</dbReference>
<dbReference type="PRINTS" id="PR00321">
    <property type="entry name" value="GPROTEING"/>
</dbReference>
<dbReference type="SMART" id="SM01224">
    <property type="entry name" value="G_gamma"/>
    <property type="match status" value="1"/>
</dbReference>
<dbReference type="SMART" id="SM00224">
    <property type="entry name" value="GGL"/>
    <property type="match status" value="1"/>
</dbReference>
<dbReference type="SUPFAM" id="SSF48670">
    <property type="entry name" value="Transducin (heterotrimeric G protein), gamma chain"/>
    <property type="match status" value="1"/>
</dbReference>
<dbReference type="PROSITE" id="PS50058">
    <property type="entry name" value="G_PROTEIN_GAMMA"/>
    <property type="match status" value="1"/>
</dbReference>
<organism>
    <name type="scientific">Drosophila melanogaster</name>
    <name type="common">Fruit fly</name>
    <dbReference type="NCBI Taxonomy" id="7227"/>
    <lineage>
        <taxon>Eukaryota</taxon>
        <taxon>Metazoa</taxon>
        <taxon>Ecdysozoa</taxon>
        <taxon>Arthropoda</taxon>
        <taxon>Hexapoda</taxon>
        <taxon>Insecta</taxon>
        <taxon>Pterygota</taxon>
        <taxon>Neoptera</taxon>
        <taxon>Endopterygota</taxon>
        <taxon>Diptera</taxon>
        <taxon>Brachycera</taxon>
        <taxon>Muscomorpha</taxon>
        <taxon>Ephydroidea</taxon>
        <taxon>Drosophilidae</taxon>
        <taxon>Drosophila</taxon>
        <taxon>Sophophora</taxon>
    </lineage>
</organism>
<sequence length="72" mass="8398">MDPSALQNMDRDALKKQIENMKYQASMERWPLSKSIAEMRSFIEENEKNDPLINAPDKKNNPWAEKGKCVIM</sequence>